<feature type="chain" id="PRO_0000438024" description="AIG2-like protein D">
    <location>
        <begin position="1"/>
        <end position="152"/>
    </location>
</feature>
<feature type="active site" description="Proton acceptor" evidence="1">
    <location>
        <position position="81"/>
    </location>
</feature>
<feature type="binding site" evidence="1">
    <location>
        <begin position="13"/>
        <end position="18"/>
    </location>
    <ligand>
        <name>substrate</name>
    </ligand>
</feature>
<sequence length="152" mass="17484">MSGTVTMHSVFVYGSLMADDVVRLLLNRIPQTASATLPDFHRFSIKGRVYPAIIPAKSDKVSGKVLFGITDDELNVLDEFEDVEYERENVQVLLTDSSDEKLQTKTYVWAKKDDPDLYGTWDFEEWKQLHMEGFLKMTKEFAEELNLPKSEI</sequence>
<name>AIGLD_ARATH</name>
<protein>
    <recommendedName>
        <fullName evidence="2">AIG2-like protein D</fullName>
        <ecNumber evidence="2">2.3.2.-</ecNumber>
    </recommendedName>
    <alternativeName>
        <fullName evidence="2">Avirulence-induced gene 2-like protein D</fullName>
    </alternativeName>
    <alternativeName>
        <fullName evidence="1">Putative gamma-glutamylcyclotransferase</fullName>
    </alternativeName>
</protein>
<dbReference type="EC" id="2.3.2.-" evidence="2"/>
<dbReference type="EMBL" id="AC006403">
    <property type="protein sequence ID" value="AAD18111.1"/>
    <property type="status" value="ALT_SEQ"/>
    <property type="molecule type" value="Genomic_DNA"/>
</dbReference>
<dbReference type="EMBL" id="CP002685">
    <property type="protein sequence ID" value="AEC07568.1"/>
    <property type="molecule type" value="Genomic_DNA"/>
</dbReference>
<dbReference type="EMBL" id="AK227944">
    <property type="protein sequence ID" value="BAE99912.1"/>
    <property type="molecule type" value="mRNA"/>
</dbReference>
<dbReference type="PIR" id="A84636">
    <property type="entry name" value="A84636"/>
</dbReference>
<dbReference type="RefSeq" id="NP_180015.3">
    <molecule id="A8MRP2-1"/>
    <property type="nucleotide sequence ID" value="NM_128000.4"/>
</dbReference>
<dbReference type="SMR" id="A8MRP2"/>
<dbReference type="FunCoup" id="A8MRP2">
    <property type="interactions" value="4"/>
</dbReference>
<dbReference type="STRING" id="3702.A8MRP2"/>
<dbReference type="PaxDb" id="3702-AT2G24390.1"/>
<dbReference type="EnsemblPlants" id="AT2G24390.1">
    <molecule id="A8MRP2-1"/>
    <property type="protein sequence ID" value="AT2G24390.1"/>
    <property type="gene ID" value="AT2G24390"/>
</dbReference>
<dbReference type="GeneID" id="816974"/>
<dbReference type="Gramene" id="AT2G24390.1">
    <molecule id="A8MRP2-1"/>
    <property type="protein sequence ID" value="AT2G24390.1"/>
    <property type="gene ID" value="AT2G24390"/>
</dbReference>
<dbReference type="KEGG" id="ath:AT2G24390"/>
<dbReference type="Araport" id="AT2G24390"/>
<dbReference type="TAIR" id="AT2G24390"/>
<dbReference type="eggNOG" id="ENOG502RXRF">
    <property type="taxonomic scope" value="Eukaryota"/>
</dbReference>
<dbReference type="InParanoid" id="A8MRP2"/>
<dbReference type="OMA" id="DPEPWQK"/>
<dbReference type="OrthoDB" id="1044435at2759"/>
<dbReference type="PhylomeDB" id="A8MRP2"/>
<dbReference type="PRO" id="PR:A8MRP2"/>
<dbReference type="Proteomes" id="UP000006548">
    <property type="component" value="Chromosome 2"/>
</dbReference>
<dbReference type="ExpressionAtlas" id="A8MRP2">
    <property type="expression patterns" value="baseline and differential"/>
</dbReference>
<dbReference type="GO" id="GO:0016746">
    <property type="term" value="F:acyltransferase activity"/>
    <property type="evidence" value="ECO:0007669"/>
    <property type="project" value="UniProtKB-KW"/>
</dbReference>
<dbReference type="CDD" id="cd06661">
    <property type="entry name" value="GGCT_like"/>
    <property type="match status" value="1"/>
</dbReference>
<dbReference type="FunFam" id="3.10.490.10:FF:000022">
    <property type="entry name" value="Protein AIG2 B"/>
    <property type="match status" value="1"/>
</dbReference>
<dbReference type="Gene3D" id="6.10.250.210">
    <property type="match status" value="1"/>
</dbReference>
<dbReference type="Gene3D" id="3.10.490.10">
    <property type="entry name" value="Gamma-glutamyl cyclotransferase-like"/>
    <property type="match status" value="1"/>
</dbReference>
<dbReference type="InterPro" id="IPR045038">
    <property type="entry name" value="AIG2-like"/>
</dbReference>
<dbReference type="InterPro" id="IPR009288">
    <property type="entry name" value="AIG2-like_dom"/>
</dbReference>
<dbReference type="InterPro" id="IPR013024">
    <property type="entry name" value="GGCT-like"/>
</dbReference>
<dbReference type="InterPro" id="IPR036568">
    <property type="entry name" value="GGCT-like_sf"/>
</dbReference>
<dbReference type="PANTHER" id="PTHR31544">
    <property type="entry name" value="AIG2-LIKE PROTEIN D"/>
    <property type="match status" value="1"/>
</dbReference>
<dbReference type="PANTHER" id="PTHR31544:SF2">
    <property type="entry name" value="AIG2-LIKE PROTEIN D"/>
    <property type="match status" value="1"/>
</dbReference>
<dbReference type="Pfam" id="PF06094">
    <property type="entry name" value="GGACT"/>
    <property type="match status" value="1"/>
</dbReference>
<dbReference type="SUPFAM" id="SSF110857">
    <property type="entry name" value="Gamma-glutamyl cyclotransferase-like"/>
    <property type="match status" value="1"/>
</dbReference>
<evidence type="ECO:0000250" key="1">
    <source>
        <dbReference type="UniProtKB" id="O75223"/>
    </source>
</evidence>
<evidence type="ECO:0000305" key="2"/>
<evidence type="ECO:0000305" key="3">
    <source>
    </source>
</evidence>
<evidence type="ECO:0000312" key="4">
    <source>
        <dbReference type="Araport" id="AT2G24390"/>
    </source>
</evidence>
<evidence type="ECO:0000312" key="5">
    <source>
        <dbReference type="EMBL" id="AAD18111.1"/>
    </source>
</evidence>
<evidence type="ECO:0000312" key="6">
    <source>
        <dbReference type="Proteomes" id="UP000006548"/>
    </source>
</evidence>
<organism evidence="6">
    <name type="scientific">Arabidopsis thaliana</name>
    <name type="common">Mouse-ear cress</name>
    <dbReference type="NCBI Taxonomy" id="3702"/>
    <lineage>
        <taxon>Eukaryota</taxon>
        <taxon>Viridiplantae</taxon>
        <taxon>Streptophyta</taxon>
        <taxon>Embryophyta</taxon>
        <taxon>Tracheophyta</taxon>
        <taxon>Spermatophyta</taxon>
        <taxon>Magnoliopsida</taxon>
        <taxon>eudicotyledons</taxon>
        <taxon>Gunneridae</taxon>
        <taxon>Pentapetalae</taxon>
        <taxon>rosids</taxon>
        <taxon>malvids</taxon>
        <taxon>Brassicales</taxon>
        <taxon>Brassicaceae</taxon>
        <taxon>Camelineae</taxon>
        <taxon>Arabidopsis</taxon>
    </lineage>
</organism>
<proteinExistence type="evidence at transcript level"/>
<keyword id="KW-0012">Acyltransferase</keyword>
<keyword id="KW-0025">Alternative splicing</keyword>
<keyword id="KW-1185">Reference proteome</keyword>
<keyword id="KW-0808">Transferase</keyword>
<accession>A8MRP2</accession>
<accession>Q0WSI6</accession>
<accession>Q9ZQ29</accession>
<reference key="1">
    <citation type="journal article" date="1999" name="Nature">
        <title>Sequence and analysis of chromosome 2 of the plant Arabidopsis thaliana.</title>
        <authorList>
            <person name="Lin X."/>
            <person name="Kaul S."/>
            <person name="Rounsley S.D."/>
            <person name="Shea T.P."/>
            <person name="Benito M.-I."/>
            <person name="Town C.D."/>
            <person name="Fujii C.Y."/>
            <person name="Mason T.M."/>
            <person name="Bowman C.L."/>
            <person name="Barnstead M.E."/>
            <person name="Feldblyum T.V."/>
            <person name="Buell C.R."/>
            <person name="Ketchum K.A."/>
            <person name="Lee J.J."/>
            <person name="Ronning C.M."/>
            <person name="Koo H.L."/>
            <person name="Moffat K.S."/>
            <person name="Cronin L.A."/>
            <person name="Shen M."/>
            <person name="Pai G."/>
            <person name="Van Aken S."/>
            <person name="Umayam L."/>
            <person name="Tallon L.J."/>
            <person name="Gill J.E."/>
            <person name="Adams M.D."/>
            <person name="Carrera A.J."/>
            <person name="Creasy T.H."/>
            <person name="Goodman H.M."/>
            <person name="Somerville C.R."/>
            <person name="Copenhaver G.P."/>
            <person name="Preuss D."/>
            <person name="Nierman W.C."/>
            <person name="White O."/>
            <person name="Eisen J.A."/>
            <person name="Salzberg S.L."/>
            <person name="Fraser C.M."/>
            <person name="Venter J.C."/>
        </authorList>
    </citation>
    <scope>NUCLEOTIDE SEQUENCE [LARGE SCALE GENOMIC DNA]</scope>
    <source>
        <strain>cv. Columbia</strain>
    </source>
</reference>
<reference key="2">
    <citation type="journal article" date="2017" name="Plant J.">
        <title>Araport11: a complete reannotation of the Arabidopsis thaliana reference genome.</title>
        <authorList>
            <person name="Cheng C.Y."/>
            <person name="Krishnakumar V."/>
            <person name="Chan A.P."/>
            <person name="Thibaud-Nissen F."/>
            <person name="Schobel S."/>
            <person name="Town C.D."/>
        </authorList>
    </citation>
    <scope>GENOME REANNOTATION</scope>
    <source>
        <strain>cv. Columbia</strain>
    </source>
</reference>
<reference key="3">
    <citation type="submission" date="2006-07" db="EMBL/GenBank/DDBJ databases">
        <title>Large-scale analysis of RIKEN Arabidopsis full-length (RAFL) cDNAs.</title>
        <authorList>
            <person name="Totoki Y."/>
            <person name="Seki M."/>
            <person name="Ishida J."/>
            <person name="Nakajima M."/>
            <person name="Enju A."/>
            <person name="Kamiya A."/>
            <person name="Narusaka M."/>
            <person name="Shin-i T."/>
            <person name="Nakagawa M."/>
            <person name="Sakamoto N."/>
            <person name="Oishi K."/>
            <person name="Kohara Y."/>
            <person name="Kobayashi M."/>
            <person name="Toyoda A."/>
            <person name="Sakaki Y."/>
            <person name="Sakurai T."/>
            <person name="Iida K."/>
            <person name="Akiyama K."/>
            <person name="Satou M."/>
            <person name="Toyoda T."/>
            <person name="Konagaya A."/>
            <person name="Carninci P."/>
            <person name="Kawai J."/>
            <person name="Hayashizaki Y."/>
            <person name="Shinozaki K."/>
        </authorList>
    </citation>
    <scope>NUCLEOTIDE SEQUENCE [LARGE SCALE MRNA] OF 114-152</scope>
    <source>
        <strain>cv. Columbia</strain>
    </source>
</reference>
<reference key="4">
    <citation type="journal article" date="2008" name="Proteins">
        <title>Solution structure of At3g28950 from Arabidopsis thaliana.</title>
        <authorList>
            <person name="de la Cruz N.B."/>
            <person name="Peterson F.C."/>
            <person name="Volkman B.F."/>
        </authorList>
    </citation>
    <scope>GENE FAMILY</scope>
</reference>
<gene>
    <name evidence="2" type="primary">AIG2LD</name>
    <name evidence="4" type="ordered locus">At2g24390</name>
    <name evidence="5" type="ORF">T28I24.12</name>
</gene>
<comment type="function">
    <text evidence="1">Putative gamma-glutamylcyclotransferase.</text>
</comment>
<comment type="alternative products">
    <event type="alternative splicing"/>
    <isoform>
        <id>A8MRP2-1</id>
        <name>1</name>
        <sequence type="displayed"/>
    </isoform>
    <text evidence="2">A number of isoforms are produced.</text>
</comment>
<comment type="tissue specificity">
    <text evidence="3">Expressed mainly in leaves.</text>
</comment>
<comment type="induction">
    <text evidence="3">Down-regulated by biological and chemical stimuli.</text>
</comment>
<comment type="similarity">
    <text evidence="2">Belongs to the gamma-glutamylcyclotransferase family.</text>
</comment>
<comment type="sequence caution" evidence="2">
    <conflict type="erroneous gene model prediction">
        <sequence resource="EMBL-CDS" id="AAD18111"/>
    </conflict>
</comment>